<comment type="function">
    <text evidence="1">Catalyzes the reversible interconversion of serine and glycine with tetrahydrofolate (THF) serving as the one-carbon carrier. This reaction serves as the major source of one-carbon groups required for the biosynthesis of purines, thymidylate, methionine, and other important biomolecules. Also exhibits THF-independent aldolase activity toward beta-hydroxyamino acids, producing glycine and aldehydes, via a retro-aldol mechanism.</text>
</comment>
<comment type="catalytic activity">
    <reaction evidence="1">
        <text>(6R)-5,10-methylene-5,6,7,8-tetrahydrofolate + glycine + H2O = (6S)-5,6,7,8-tetrahydrofolate + L-serine</text>
        <dbReference type="Rhea" id="RHEA:15481"/>
        <dbReference type="ChEBI" id="CHEBI:15377"/>
        <dbReference type="ChEBI" id="CHEBI:15636"/>
        <dbReference type="ChEBI" id="CHEBI:33384"/>
        <dbReference type="ChEBI" id="CHEBI:57305"/>
        <dbReference type="ChEBI" id="CHEBI:57453"/>
        <dbReference type="EC" id="2.1.2.1"/>
    </reaction>
</comment>
<comment type="cofactor">
    <cofactor evidence="1">
        <name>pyridoxal 5'-phosphate</name>
        <dbReference type="ChEBI" id="CHEBI:597326"/>
    </cofactor>
</comment>
<comment type="pathway">
    <text evidence="1">One-carbon metabolism; tetrahydrofolate interconversion.</text>
</comment>
<comment type="pathway">
    <text evidence="1">Amino-acid biosynthesis; glycine biosynthesis; glycine from L-serine: step 1/1.</text>
</comment>
<comment type="subunit">
    <text evidence="1">Homodimer.</text>
</comment>
<comment type="subcellular location">
    <subcellularLocation>
        <location evidence="1">Cytoplasm</location>
    </subcellularLocation>
</comment>
<comment type="similarity">
    <text evidence="1">Belongs to the SHMT family.</text>
</comment>
<reference key="1">
    <citation type="journal article" date="1995" name="Science">
        <title>Whole-genome random sequencing and assembly of Haemophilus influenzae Rd.</title>
        <authorList>
            <person name="Fleischmann R.D."/>
            <person name="Adams M.D."/>
            <person name="White O."/>
            <person name="Clayton R.A."/>
            <person name="Kirkness E.F."/>
            <person name="Kerlavage A.R."/>
            <person name="Bult C.J."/>
            <person name="Tomb J.-F."/>
            <person name="Dougherty B.A."/>
            <person name="Merrick J.M."/>
            <person name="McKenney K."/>
            <person name="Sutton G.G."/>
            <person name="FitzHugh W."/>
            <person name="Fields C.A."/>
            <person name="Gocayne J.D."/>
            <person name="Scott J.D."/>
            <person name="Shirley R."/>
            <person name="Liu L.-I."/>
            <person name="Glodek A."/>
            <person name="Kelley J.M."/>
            <person name="Weidman J.F."/>
            <person name="Phillips C.A."/>
            <person name="Spriggs T."/>
            <person name="Hedblom E."/>
            <person name="Cotton M.D."/>
            <person name="Utterback T.R."/>
            <person name="Hanna M.C."/>
            <person name="Nguyen D.T."/>
            <person name="Saudek D.M."/>
            <person name="Brandon R.C."/>
            <person name="Fine L.D."/>
            <person name="Fritchman J.L."/>
            <person name="Fuhrmann J.L."/>
            <person name="Geoghagen N.S.M."/>
            <person name="Gnehm C.L."/>
            <person name="McDonald L.A."/>
            <person name="Small K.V."/>
            <person name="Fraser C.M."/>
            <person name="Smith H.O."/>
            <person name="Venter J.C."/>
        </authorList>
    </citation>
    <scope>NUCLEOTIDE SEQUENCE [LARGE SCALE GENOMIC DNA]</scope>
    <source>
        <strain>ATCC 51907 / DSM 11121 / KW20 / Rd</strain>
    </source>
</reference>
<dbReference type="EC" id="2.1.2.1" evidence="1"/>
<dbReference type="EMBL" id="L42023">
    <property type="protein sequence ID" value="AAC22549.1"/>
    <property type="molecule type" value="Genomic_DNA"/>
</dbReference>
<dbReference type="PIR" id="D64100">
    <property type="entry name" value="D64100"/>
</dbReference>
<dbReference type="RefSeq" id="NP_439050.1">
    <property type="nucleotide sequence ID" value="NC_000907.1"/>
</dbReference>
<dbReference type="SMR" id="P43844"/>
<dbReference type="STRING" id="71421.HI_0889"/>
<dbReference type="EnsemblBacteria" id="AAC22549">
    <property type="protein sequence ID" value="AAC22549"/>
    <property type="gene ID" value="HI_0889"/>
</dbReference>
<dbReference type="KEGG" id="hin:HI_0889"/>
<dbReference type="PATRIC" id="fig|71421.8.peg.931"/>
<dbReference type="eggNOG" id="COG0112">
    <property type="taxonomic scope" value="Bacteria"/>
</dbReference>
<dbReference type="HOGENOM" id="CLU_022477_2_1_6"/>
<dbReference type="OrthoDB" id="9803846at2"/>
<dbReference type="PhylomeDB" id="P43844"/>
<dbReference type="BioCyc" id="HINF71421:G1GJ1-929-MONOMER"/>
<dbReference type="UniPathway" id="UPA00193"/>
<dbReference type="UniPathway" id="UPA00288">
    <property type="reaction ID" value="UER01023"/>
</dbReference>
<dbReference type="Proteomes" id="UP000000579">
    <property type="component" value="Chromosome"/>
</dbReference>
<dbReference type="GO" id="GO:0005737">
    <property type="term" value="C:cytoplasm"/>
    <property type="evidence" value="ECO:0000318"/>
    <property type="project" value="GO_Central"/>
</dbReference>
<dbReference type="GO" id="GO:0005829">
    <property type="term" value="C:cytosol"/>
    <property type="evidence" value="ECO:0000318"/>
    <property type="project" value="GO_Central"/>
</dbReference>
<dbReference type="GO" id="GO:0004372">
    <property type="term" value="F:glycine hydroxymethyltransferase activity"/>
    <property type="evidence" value="ECO:0000318"/>
    <property type="project" value="GO_Central"/>
</dbReference>
<dbReference type="GO" id="GO:0030170">
    <property type="term" value="F:pyridoxal phosphate binding"/>
    <property type="evidence" value="ECO:0000318"/>
    <property type="project" value="GO_Central"/>
</dbReference>
<dbReference type="GO" id="GO:0019264">
    <property type="term" value="P:glycine biosynthetic process from serine"/>
    <property type="evidence" value="ECO:0000318"/>
    <property type="project" value="GO_Central"/>
</dbReference>
<dbReference type="GO" id="GO:0035999">
    <property type="term" value="P:tetrahydrofolate interconversion"/>
    <property type="evidence" value="ECO:0007669"/>
    <property type="project" value="UniProtKB-UniRule"/>
</dbReference>
<dbReference type="GO" id="GO:0046653">
    <property type="term" value="P:tetrahydrofolate metabolic process"/>
    <property type="evidence" value="ECO:0000318"/>
    <property type="project" value="GO_Central"/>
</dbReference>
<dbReference type="CDD" id="cd00378">
    <property type="entry name" value="SHMT"/>
    <property type="match status" value="1"/>
</dbReference>
<dbReference type="FunFam" id="3.40.640.10:FF:000001">
    <property type="entry name" value="Serine hydroxymethyltransferase"/>
    <property type="match status" value="1"/>
</dbReference>
<dbReference type="FunFam" id="3.90.1150.10:FF:000003">
    <property type="entry name" value="Serine hydroxymethyltransferase"/>
    <property type="match status" value="1"/>
</dbReference>
<dbReference type="Gene3D" id="3.90.1150.10">
    <property type="entry name" value="Aspartate Aminotransferase, domain 1"/>
    <property type="match status" value="1"/>
</dbReference>
<dbReference type="Gene3D" id="3.40.640.10">
    <property type="entry name" value="Type I PLP-dependent aspartate aminotransferase-like (Major domain)"/>
    <property type="match status" value="1"/>
</dbReference>
<dbReference type="HAMAP" id="MF_00051">
    <property type="entry name" value="SHMT"/>
    <property type="match status" value="1"/>
</dbReference>
<dbReference type="InterPro" id="IPR015424">
    <property type="entry name" value="PyrdxlP-dep_Trfase"/>
</dbReference>
<dbReference type="InterPro" id="IPR015421">
    <property type="entry name" value="PyrdxlP-dep_Trfase_major"/>
</dbReference>
<dbReference type="InterPro" id="IPR015422">
    <property type="entry name" value="PyrdxlP-dep_Trfase_small"/>
</dbReference>
<dbReference type="InterPro" id="IPR001085">
    <property type="entry name" value="Ser_HO-MeTrfase"/>
</dbReference>
<dbReference type="InterPro" id="IPR049943">
    <property type="entry name" value="Ser_HO-MeTrfase-like"/>
</dbReference>
<dbReference type="InterPro" id="IPR019798">
    <property type="entry name" value="Ser_HO-MeTrfase_PLP_BS"/>
</dbReference>
<dbReference type="InterPro" id="IPR039429">
    <property type="entry name" value="SHMT-like_dom"/>
</dbReference>
<dbReference type="NCBIfam" id="NF000586">
    <property type="entry name" value="PRK00011.1"/>
    <property type="match status" value="1"/>
</dbReference>
<dbReference type="PANTHER" id="PTHR11680">
    <property type="entry name" value="SERINE HYDROXYMETHYLTRANSFERASE"/>
    <property type="match status" value="1"/>
</dbReference>
<dbReference type="PANTHER" id="PTHR11680:SF50">
    <property type="entry name" value="SERINE HYDROXYMETHYLTRANSFERASE"/>
    <property type="match status" value="1"/>
</dbReference>
<dbReference type="Pfam" id="PF00464">
    <property type="entry name" value="SHMT"/>
    <property type="match status" value="1"/>
</dbReference>
<dbReference type="PIRSF" id="PIRSF000412">
    <property type="entry name" value="SHMT"/>
    <property type="match status" value="1"/>
</dbReference>
<dbReference type="SUPFAM" id="SSF53383">
    <property type="entry name" value="PLP-dependent transferases"/>
    <property type="match status" value="1"/>
</dbReference>
<dbReference type="PROSITE" id="PS00096">
    <property type="entry name" value="SHMT"/>
    <property type="match status" value="1"/>
</dbReference>
<protein>
    <recommendedName>
        <fullName evidence="1">Serine hydroxymethyltransferase</fullName>
        <shortName evidence="1">SHMT</shortName>
        <shortName evidence="1">Serine methylase</shortName>
        <ecNumber evidence="1">2.1.2.1</ecNumber>
    </recommendedName>
</protein>
<evidence type="ECO:0000255" key="1">
    <source>
        <dbReference type="HAMAP-Rule" id="MF_00051"/>
    </source>
</evidence>
<keyword id="KW-0028">Amino-acid biosynthesis</keyword>
<keyword id="KW-0963">Cytoplasm</keyword>
<keyword id="KW-0554">One-carbon metabolism</keyword>
<keyword id="KW-0663">Pyridoxal phosphate</keyword>
<keyword id="KW-1185">Reference proteome</keyword>
<keyword id="KW-0808">Transferase</keyword>
<sequence length="421" mass="45904">MFTRNMTIADYDPVLWQAIQDENRRQEEHIELIASENYASPRVMEAQGSQFTNKYAEGYPGKRYYGGCEYADIVEQLAIDRAKELFGADYVNVQPHSGSQANAAVYGALINAGDTILGMDLAHGGHLTHGAKVSFSGKIYNSVLYGITADGLIDYEDVRQKALECKPKLIVAGFSAYSQVVDWAKMREIADEVGAYLFVDMAHVAGLIAAGLYPNPLPHAHVVTTTTHKTLGGPRGGLILSSCGDEEIYKKLQSSVFPANQGGPLVHIIAAKAVCFKGALEPQYKEYQANVIKNAKAMVEVFKQRGYDVVSNGTENHLFLVSFIKQGLTGKAADAALGKANITVNKNAVPNDPQKPFVTSGIRVGTPSVTRRGFNENDVRELAGWMCDVLDALGKENEEQVIAETKEKVLAICKRLPVYPK</sequence>
<feature type="chain" id="PRO_0000113583" description="Serine hydroxymethyltransferase">
    <location>
        <begin position="1"/>
        <end position="421"/>
    </location>
</feature>
<feature type="binding site" evidence="1">
    <location>
        <position position="121"/>
    </location>
    <ligand>
        <name>(6S)-5,6,7,8-tetrahydrofolate</name>
        <dbReference type="ChEBI" id="CHEBI:57453"/>
    </ligand>
</feature>
<feature type="binding site" evidence="1">
    <location>
        <begin position="125"/>
        <end position="127"/>
    </location>
    <ligand>
        <name>(6S)-5,6,7,8-tetrahydrofolate</name>
        <dbReference type="ChEBI" id="CHEBI:57453"/>
    </ligand>
</feature>
<feature type="site" description="Plays an important role in substrate specificity" evidence="1">
    <location>
        <position position="228"/>
    </location>
</feature>
<feature type="modified residue" description="N6-(pyridoxal phosphate)lysine" evidence="1">
    <location>
        <position position="229"/>
    </location>
</feature>
<name>GLYA_HAEIN</name>
<gene>
    <name evidence="1" type="primary">glyA</name>
    <name type="ordered locus">HI_0889</name>
</gene>
<accession>P43844</accession>
<proteinExistence type="inferred from homology"/>
<organism>
    <name type="scientific">Haemophilus influenzae (strain ATCC 51907 / DSM 11121 / KW20 / Rd)</name>
    <dbReference type="NCBI Taxonomy" id="71421"/>
    <lineage>
        <taxon>Bacteria</taxon>
        <taxon>Pseudomonadati</taxon>
        <taxon>Pseudomonadota</taxon>
        <taxon>Gammaproteobacteria</taxon>
        <taxon>Pasteurellales</taxon>
        <taxon>Pasteurellaceae</taxon>
        <taxon>Haemophilus</taxon>
    </lineage>
</organism>